<organism>
    <name type="scientific">Neorickettsia sennetsu (strain ATCC VR-367 / Miyayama)</name>
    <name type="common">Ehrlichia sennetsu</name>
    <dbReference type="NCBI Taxonomy" id="222891"/>
    <lineage>
        <taxon>Bacteria</taxon>
        <taxon>Pseudomonadati</taxon>
        <taxon>Pseudomonadota</taxon>
        <taxon>Alphaproteobacteria</taxon>
        <taxon>Rickettsiales</taxon>
        <taxon>Anaplasmataceae</taxon>
        <taxon>Neorickettsia</taxon>
    </lineage>
</organism>
<accession>Q2GDL7</accession>
<proteinExistence type="inferred from homology"/>
<feature type="chain" id="PRO_0000282764" description="Ribosomal RNA large subunit methyltransferase E">
    <location>
        <begin position="1"/>
        <end position="213"/>
    </location>
</feature>
<feature type="active site" description="Proton acceptor" evidence="1">
    <location>
        <position position="167"/>
    </location>
</feature>
<feature type="binding site" evidence="1">
    <location>
        <position position="68"/>
    </location>
    <ligand>
        <name>S-adenosyl-L-methionine</name>
        <dbReference type="ChEBI" id="CHEBI:59789"/>
    </ligand>
</feature>
<feature type="binding site" evidence="1">
    <location>
        <position position="70"/>
    </location>
    <ligand>
        <name>S-adenosyl-L-methionine</name>
        <dbReference type="ChEBI" id="CHEBI:59789"/>
    </ligand>
</feature>
<feature type="binding site" evidence="1">
    <location>
        <position position="88"/>
    </location>
    <ligand>
        <name>S-adenosyl-L-methionine</name>
        <dbReference type="ChEBI" id="CHEBI:59789"/>
    </ligand>
</feature>
<feature type="binding site" evidence="1">
    <location>
        <position position="104"/>
    </location>
    <ligand>
        <name>S-adenosyl-L-methionine</name>
        <dbReference type="ChEBI" id="CHEBI:59789"/>
    </ligand>
</feature>
<feature type="binding site" evidence="1">
    <location>
        <position position="127"/>
    </location>
    <ligand>
        <name>S-adenosyl-L-methionine</name>
        <dbReference type="ChEBI" id="CHEBI:59789"/>
    </ligand>
</feature>
<protein>
    <recommendedName>
        <fullName evidence="1">Ribosomal RNA large subunit methyltransferase E</fullName>
        <ecNumber evidence="1">2.1.1.166</ecNumber>
    </recommendedName>
    <alternativeName>
        <fullName evidence="1">23S rRNA Um2552 methyltransferase</fullName>
    </alternativeName>
    <alternativeName>
        <fullName evidence="1">rRNA (uridine-2'-O-)-methyltransferase</fullName>
    </alternativeName>
</protein>
<comment type="function">
    <text evidence="1">Specifically methylates the uridine in position 2552 of 23S rRNA at the 2'-O position of the ribose in the fully assembled 50S ribosomal subunit.</text>
</comment>
<comment type="catalytic activity">
    <reaction evidence="1">
        <text>uridine(2552) in 23S rRNA + S-adenosyl-L-methionine = 2'-O-methyluridine(2552) in 23S rRNA + S-adenosyl-L-homocysteine + H(+)</text>
        <dbReference type="Rhea" id="RHEA:42720"/>
        <dbReference type="Rhea" id="RHEA-COMP:10202"/>
        <dbReference type="Rhea" id="RHEA-COMP:10203"/>
        <dbReference type="ChEBI" id="CHEBI:15378"/>
        <dbReference type="ChEBI" id="CHEBI:57856"/>
        <dbReference type="ChEBI" id="CHEBI:59789"/>
        <dbReference type="ChEBI" id="CHEBI:65315"/>
        <dbReference type="ChEBI" id="CHEBI:74478"/>
        <dbReference type="EC" id="2.1.1.166"/>
    </reaction>
</comment>
<comment type="subcellular location">
    <subcellularLocation>
        <location evidence="1">Cytoplasm</location>
    </subcellularLocation>
</comment>
<comment type="similarity">
    <text evidence="1">Belongs to the class I-like SAM-binding methyltransferase superfamily. RNA methyltransferase RlmE family.</text>
</comment>
<name>RLME_NEOSM</name>
<reference key="1">
    <citation type="journal article" date="2006" name="PLoS Genet.">
        <title>Comparative genomics of emerging human ehrlichiosis agents.</title>
        <authorList>
            <person name="Dunning Hotopp J.C."/>
            <person name="Lin M."/>
            <person name="Madupu R."/>
            <person name="Crabtree J."/>
            <person name="Angiuoli S.V."/>
            <person name="Eisen J.A."/>
            <person name="Seshadri R."/>
            <person name="Ren Q."/>
            <person name="Wu M."/>
            <person name="Utterback T.R."/>
            <person name="Smith S."/>
            <person name="Lewis M."/>
            <person name="Khouri H."/>
            <person name="Zhang C."/>
            <person name="Niu H."/>
            <person name="Lin Q."/>
            <person name="Ohashi N."/>
            <person name="Zhi N."/>
            <person name="Nelson W.C."/>
            <person name="Brinkac L.M."/>
            <person name="Dodson R.J."/>
            <person name="Rosovitz M.J."/>
            <person name="Sundaram J.P."/>
            <person name="Daugherty S.C."/>
            <person name="Davidsen T."/>
            <person name="Durkin A.S."/>
            <person name="Gwinn M.L."/>
            <person name="Haft D.H."/>
            <person name="Selengut J.D."/>
            <person name="Sullivan S.A."/>
            <person name="Zafar N."/>
            <person name="Zhou L."/>
            <person name="Benahmed F."/>
            <person name="Forberger H."/>
            <person name="Halpin R."/>
            <person name="Mulligan S."/>
            <person name="Robinson J."/>
            <person name="White O."/>
            <person name="Rikihisa Y."/>
            <person name="Tettelin H."/>
        </authorList>
    </citation>
    <scope>NUCLEOTIDE SEQUENCE [LARGE SCALE GENOMIC DNA]</scope>
    <source>
        <strain>ATCC VR-367 / Miyayama</strain>
    </source>
</reference>
<gene>
    <name evidence="1" type="primary">rlmE</name>
    <name evidence="1" type="synonym">ftsJ</name>
    <name evidence="1" type="synonym">rrmJ</name>
    <name type="ordered locus">NSE_0546</name>
</gene>
<evidence type="ECO:0000255" key="1">
    <source>
        <dbReference type="HAMAP-Rule" id="MF_01547"/>
    </source>
</evidence>
<dbReference type="EC" id="2.1.1.166" evidence="1"/>
<dbReference type="EMBL" id="CP000237">
    <property type="protein sequence ID" value="ABD46360.1"/>
    <property type="molecule type" value="Genomic_DNA"/>
</dbReference>
<dbReference type="RefSeq" id="WP_011451935.1">
    <property type="nucleotide sequence ID" value="NC_007798.1"/>
</dbReference>
<dbReference type="SMR" id="Q2GDL7"/>
<dbReference type="STRING" id="222891.NSE_0546"/>
<dbReference type="KEGG" id="nse:NSE_0546"/>
<dbReference type="eggNOG" id="COG0293">
    <property type="taxonomic scope" value="Bacteria"/>
</dbReference>
<dbReference type="HOGENOM" id="CLU_009422_4_0_5"/>
<dbReference type="OrthoDB" id="9790080at2"/>
<dbReference type="Proteomes" id="UP000001942">
    <property type="component" value="Chromosome"/>
</dbReference>
<dbReference type="GO" id="GO:0005737">
    <property type="term" value="C:cytoplasm"/>
    <property type="evidence" value="ECO:0007669"/>
    <property type="project" value="UniProtKB-SubCell"/>
</dbReference>
<dbReference type="GO" id="GO:0008650">
    <property type="term" value="F:rRNA (uridine-2'-O-)-methyltransferase activity"/>
    <property type="evidence" value="ECO:0007669"/>
    <property type="project" value="UniProtKB-UniRule"/>
</dbReference>
<dbReference type="Gene3D" id="3.40.50.150">
    <property type="entry name" value="Vaccinia Virus protein VP39"/>
    <property type="match status" value="1"/>
</dbReference>
<dbReference type="HAMAP" id="MF_01547">
    <property type="entry name" value="RNA_methyltr_E"/>
    <property type="match status" value="1"/>
</dbReference>
<dbReference type="InterPro" id="IPR050082">
    <property type="entry name" value="RNA_methyltr_RlmE"/>
</dbReference>
<dbReference type="InterPro" id="IPR002877">
    <property type="entry name" value="RNA_MeTrfase_FtsJ_dom"/>
</dbReference>
<dbReference type="InterPro" id="IPR015507">
    <property type="entry name" value="rRNA-MeTfrase_E"/>
</dbReference>
<dbReference type="InterPro" id="IPR029063">
    <property type="entry name" value="SAM-dependent_MTases_sf"/>
</dbReference>
<dbReference type="PANTHER" id="PTHR10920">
    <property type="entry name" value="RIBOSOMAL RNA METHYLTRANSFERASE"/>
    <property type="match status" value="1"/>
</dbReference>
<dbReference type="PANTHER" id="PTHR10920:SF18">
    <property type="entry name" value="RRNA METHYLTRANSFERASE 2, MITOCHONDRIAL"/>
    <property type="match status" value="1"/>
</dbReference>
<dbReference type="Pfam" id="PF01728">
    <property type="entry name" value="FtsJ"/>
    <property type="match status" value="1"/>
</dbReference>
<dbReference type="PIRSF" id="PIRSF005461">
    <property type="entry name" value="23S_rRNA_mtase"/>
    <property type="match status" value="1"/>
</dbReference>
<dbReference type="SUPFAM" id="SSF53335">
    <property type="entry name" value="S-adenosyl-L-methionine-dependent methyltransferases"/>
    <property type="match status" value="1"/>
</dbReference>
<sequence>MKNKLHRVGRCTASSSRWLYRHVNDPFVKKAKAEQYRSRAAYKLLEIDEKFNLIRKGFVVLELGSAPGGWSQVIADILNGTGRLIAVDLADMDPISGVEVVKLDIELQRKELYEYISGVELDVIVSDLAPSASGSRVTDSISSIRLAELVLHYAKNSLKKFGTVVTKILRGSEDEYRFVNSLRKQFKKIEYFKPDASRKASREIYLILLGKLS</sequence>
<keyword id="KW-0963">Cytoplasm</keyword>
<keyword id="KW-0489">Methyltransferase</keyword>
<keyword id="KW-0698">rRNA processing</keyword>
<keyword id="KW-0949">S-adenosyl-L-methionine</keyword>
<keyword id="KW-0808">Transferase</keyword>